<gene>
    <name type="primary">gutQ</name>
    <name type="ordered locus">SF2731</name>
    <name type="ordered locus">S2922</name>
</gene>
<proteinExistence type="inferred from homology"/>
<name>GUTQ_SHIFL</name>
<organism>
    <name type="scientific">Shigella flexneri</name>
    <dbReference type="NCBI Taxonomy" id="623"/>
    <lineage>
        <taxon>Bacteria</taxon>
        <taxon>Pseudomonadati</taxon>
        <taxon>Pseudomonadota</taxon>
        <taxon>Gammaproteobacteria</taxon>
        <taxon>Enterobacterales</taxon>
        <taxon>Enterobacteriaceae</taxon>
        <taxon>Shigella</taxon>
    </lineage>
</organism>
<evidence type="ECO:0000250" key="1"/>
<evidence type="ECO:0000255" key="2"/>
<evidence type="ECO:0000255" key="3">
    <source>
        <dbReference type="PROSITE-ProRule" id="PRU00703"/>
    </source>
</evidence>
<evidence type="ECO:0000255" key="4">
    <source>
        <dbReference type="PROSITE-ProRule" id="PRU00797"/>
    </source>
</evidence>
<evidence type="ECO:0000305" key="5"/>
<dbReference type="EC" id="5.3.1.13"/>
<dbReference type="EMBL" id="AE005674">
    <property type="protein sequence ID" value="AAN44222.2"/>
    <property type="status" value="ALT_INIT"/>
    <property type="molecule type" value="Genomic_DNA"/>
</dbReference>
<dbReference type="EMBL" id="AE014073">
    <property type="protein sequence ID" value="AAP18048.1"/>
    <property type="status" value="ALT_INIT"/>
    <property type="molecule type" value="Genomic_DNA"/>
</dbReference>
<dbReference type="RefSeq" id="NP_708515.4">
    <property type="nucleotide sequence ID" value="NC_004337.2"/>
</dbReference>
<dbReference type="RefSeq" id="WP_001287442.1">
    <property type="nucleotide sequence ID" value="NZ_WPGW01000014.1"/>
</dbReference>
<dbReference type="SMR" id="Q83MK2"/>
<dbReference type="STRING" id="198214.SF2731"/>
<dbReference type="PaxDb" id="198214-SF2731"/>
<dbReference type="GeneID" id="1025715"/>
<dbReference type="KEGG" id="sfl:SF2731"/>
<dbReference type="KEGG" id="sfx:S2922"/>
<dbReference type="PATRIC" id="fig|198214.7.peg.3252"/>
<dbReference type="HOGENOM" id="CLU_040681_13_1_6"/>
<dbReference type="Proteomes" id="UP000001006">
    <property type="component" value="Chromosome"/>
</dbReference>
<dbReference type="Proteomes" id="UP000002673">
    <property type="component" value="Chromosome"/>
</dbReference>
<dbReference type="GO" id="GO:0019146">
    <property type="term" value="F:arabinose-5-phosphate isomerase activity"/>
    <property type="evidence" value="ECO:0007669"/>
    <property type="project" value="UniProtKB-EC"/>
</dbReference>
<dbReference type="GO" id="GO:0005524">
    <property type="term" value="F:ATP binding"/>
    <property type="evidence" value="ECO:0007669"/>
    <property type="project" value="UniProtKB-KW"/>
</dbReference>
<dbReference type="GO" id="GO:0046872">
    <property type="term" value="F:metal ion binding"/>
    <property type="evidence" value="ECO:0007669"/>
    <property type="project" value="UniProtKB-KW"/>
</dbReference>
<dbReference type="GO" id="GO:0019294">
    <property type="term" value="P:keto-3-deoxy-D-manno-octulosonic acid biosynthetic process"/>
    <property type="evidence" value="ECO:0000250"/>
    <property type="project" value="UniProtKB"/>
</dbReference>
<dbReference type="CDD" id="cd04604">
    <property type="entry name" value="CBS_pair_SIS_assoc"/>
    <property type="match status" value="1"/>
</dbReference>
<dbReference type="CDD" id="cd05014">
    <property type="entry name" value="SIS_Kpsf"/>
    <property type="match status" value="1"/>
</dbReference>
<dbReference type="FunFam" id="3.40.50.10490:FF:000011">
    <property type="entry name" value="Arabinose 5-phosphate isomerase"/>
    <property type="match status" value="1"/>
</dbReference>
<dbReference type="Gene3D" id="3.10.580.10">
    <property type="entry name" value="CBS-domain"/>
    <property type="match status" value="1"/>
</dbReference>
<dbReference type="Gene3D" id="3.40.50.10490">
    <property type="entry name" value="Glucose-6-phosphate isomerase like protein, domain 1"/>
    <property type="match status" value="1"/>
</dbReference>
<dbReference type="InterPro" id="IPR000644">
    <property type="entry name" value="CBS_dom"/>
</dbReference>
<dbReference type="InterPro" id="IPR046342">
    <property type="entry name" value="CBS_dom_sf"/>
</dbReference>
<dbReference type="InterPro" id="IPR050986">
    <property type="entry name" value="GutQ/KpsF_isomerases"/>
</dbReference>
<dbReference type="InterPro" id="IPR004800">
    <property type="entry name" value="KdsD/KpsF-type"/>
</dbReference>
<dbReference type="InterPro" id="IPR001347">
    <property type="entry name" value="SIS_dom"/>
</dbReference>
<dbReference type="InterPro" id="IPR046348">
    <property type="entry name" value="SIS_dom_sf"/>
</dbReference>
<dbReference type="InterPro" id="IPR035474">
    <property type="entry name" value="SIS_Kpsf"/>
</dbReference>
<dbReference type="NCBIfam" id="TIGR00393">
    <property type="entry name" value="kpsF"/>
    <property type="match status" value="1"/>
</dbReference>
<dbReference type="NCBIfam" id="NF008581">
    <property type="entry name" value="PRK11543.1"/>
    <property type="match status" value="1"/>
</dbReference>
<dbReference type="PANTHER" id="PTHR42745">
    <property type="match status" value="1"/>
</dbReference>
<dbReference type="PANTHER" id="PTHR42745:SF2">
    <property type="entry name" value="ARABINOSE 5-PHOSPHATE ISOMERASE GUTQ"/>
    <property type="match status" value="1"/>
</dbReference>
<dbReference type="Pfam" id="PF00571">
    <property type="entry name" value="CBS"/>
    <property type="match status" value="2"/>
</dbReference>
<dbReference type="Pfam" id="PF01380">
    <property type="entry name" value="SIS"/>
    <property type="match status" value="1"/>
</dbReference>
<dbReference type="PIRSF" id="PIRSF004692">
    <property type="entry name" value="KdsD_KpsF"/>
    <property type="match status" value="1"/>
</dbReference>
<dbReference type="SUPFAM" id="SSF54631">
    <property type="entry name" value="CBS-domain pair"/>
    <property type="match status" value="1"/>
</dbReference>
<dbReference type="SUPFAM" id="SSF53697">
    <property type="entry name" value="SIS domain"/>
    <property type="match status" value="1"/>
</dbReference>
<dbReference type="PROSITE" id="PS51371">
    <property type="entry name" value="CBS"/>
    <property type="match status" value="2"/>
</dbReference>
<dbReference type="PROSITE" id="PS51464">
    <property type="entry name" value="SIS"/>
    <property type="match status" value="1"/>
</dbReference>
<reference key="1">
    <citation type="journal article" date="2002" name="Nucleic Acids Res.">
        <title>Genome sequence of Shigella flexneri 2a: insights into pathogenicity through comparison with genomes of Escherichia coli K12 and O157.</title>
        <authorList>
            <person name="Jin Q."/>
            <person name="Yuan Z."/>
            <person name="Xu J."/>
            <person name="Wang Y."/>
            <person name="Shen Y."/>
            <person name="Lu W."/>
            <person name="Wang J."/>
            <person name="Liu H."/>
            <person name="Yang J."/>
            <person name="Yang F."/>
            <person name="Zhang X."/>
            <person name="Zhang J."/>
            <person name="Yang G."/>
            <person name="Wu H."/>
            <person name="Qu D."/>
            <person name="Dong J."/>
            <person name="Sun L."/>
            <person name="Xue Y."/>
            <person name="Zhao A."/>
            <person name="Gao Y."/>
            <person name="Zhu J."/>
            <person name="Kan B."/>
            <person name="Ding K."/>
            <person name="Chen S."/>
            <person name="Cheng H."/>
            <person name="Yao Z."/>
            <person name="He B."/>
            <person name="Chen R."/>
            <person name="Ma D."/>
            <person name="Qiang B."/>
            <person name="Wen Y."/>
            <person name="Hou Y."/>
            <person name="Yu J."/>
        </authorList>
    </citation>
    <scope>NUCLEOTIDE SEQUENCE [LARGE SCALE GENOMIC DNA]</scope>
    <source>
        <strain>301 / Serotype 2a</strain>
    </source>
</reference>
<reference key="2">
    <citation type="journal article" date="2003" name="Infect. Immun.">
        <title>Complete genome sequence and comparative genomics of Shigella flexneri serotype 2a strain 2457T.</title>
        <authorList>
            <person name="Wei J."/>
            <person name="Goldberg M.B."/>
            <person name="Burland V."/>
            <person name="Venkatesan M.M."/>
            <person name="Deng W."/>
            <person name="Fournier G."/>
            <person name="Mayhew G.F."/>
            <person name="Plunkett G. III"/>
            <person name="Rose D.J."/>
            <person name="Darling A."/>
            <person name="Mau B."/>
            <person name="Perna N.T."/>
            <person name="Payne S.M."/>
            <person name="Runyen-Janecky L.J."/>
            <person name="Zhou S."/>
            <person name="Schwartz D.C."/>
            <person name="Blattner F.R."/>
        </authorList>
    </citation>
    <scope>NUCLEOTIDE SEQUENCE [LARGE SCALE GENOMIC DNA]</scope>
    <source>
        <strain>ATCC 700930 / 2457T / Serotype 2a</strain>
    </source>
</reference>
<comment type="function">
    <text evidence="1">Catalyzes the reversible aldol-ketol isomerization between D-ribulose 5-phosphate (Ru5P) and D-arabinose 5-phosphate (A5P). It is also able of sustaining the biosynthetic pathway of 3-deoxy-D-manno-octulosonate (KDO), a unique 8-carbon sugar component of lipopolysaccharides (LPSs) (By similarity).</text>
</comment>
<comment type="catalytic activity">
    <reaction>
        <text>D-arabinose 5-phosphate = D-ribulose 5-phosphate</text>
        <dbReference type="Rhea" id="RHEA:23104"/>
        <dbReference type="ChEBI" id="CHEBI:57693"/>
        <dbReference type="ChEBI" id="CHEBI:58121"/>
        <dbReference type="EC" id="5.3.1.13"/>
    </reaction>
</comment>
<comment type="subunit">
    <text evidence="1">Homotetramer.</text>
</comment>
<comment type="similarity">
    <text evidence="5">Belongs to the SIS family. GutQ/KpsF subfamily.</text>
</comment>
<comment type="sequence caution" evidence="5">
    <conflict type="erroneous initiation">
        <sequence resource="EMBL-CDS" id="AAN44222"/>
    </conflict>
    <text>Truncated N-terminus.</text>
</comment>
<comment type="sequence caution" evidence="5">
    <conflict type="erroneous initiation">
        <sequence resource="EMBL-CDS" id="AAP18048"/>
    </conflict>
    <text>Truncated N-terminus.</text>
</comment>
<sequence length="321" mass="34033">MSEALLNTGRQTLMLELQEASRLPERLGDDFVRAANIILHCEGKVVVSGIGKSGHIGKKIAATLASTGTPAFFVHPAEALHGDLGMIESRDVMLFISYSGGAKELDLIIPRLEDKSIALLAMTGKPTSPLGLAAKAVLDISVEREACPMHLAPTSSTVNTLMMGDALAMAVMQARGFNEEDFARSHPAGALGARLLNKVHHLMRRDDAIPQVALTASVMDAMLELSRTGLGLVAVCDAQQQVQGVFTDGDLRRWLVGGGALTTPVNEAMTTGGTTLQAQSRAIDAKEVLMKRKITAAPVVDENGKLTGAINLQDFYQAGII</sequence>
<feature type="chain" id="PRO_0000410941" description="Arabinose 5-phosphate isomerase GutQ">
    <location>
        <begin position="1"/>
        <end position="321"/>
    </location>
</feature>
<feature type="domain" description="SIS" evidence="4">
    <location>
        <begin position="34"/>
        <end position="177"/>
    </location>
</feature>
<feature type="domain" description="CBS 1" evidence="3">
    <location>
        <begin position="203"/>
        <end position="261"/>
    </location>
</feature>
<feature type="domain" description="CBS 2" evidence="3">
    <location>
        <begin position="269"/>
        <end position="321"/>
    </location>
</feature>
<feature type="binding site" evidence="2">
    <location>
        <begin position="49"/>
        <end position="54"/>
    </location>
    <ligand>
        <name>ATP</name>
        <dbReference type="ChEBI" id="CHEBI:30616"/>
    </ligand>
</feature>
<feature type="binding site" evidence="1">
    <location>
        <begin position="68"/>
        <end position="69"/>
    </location>
    <ligand>
        <name>substrate</name>
    </ligand>
</feature>
<feature type="binding site" evidence="1">
    <location>
        <position position="75"/>
    </location>
    <ligand>
        <name>substrate</name>
    </ligand>
</feature>
<feature type="binding site" evidence="1">
    <location>
        <position position="75"/>
    </location>
    <ligand>
        <name>Zn(2+)</name>
        <dbReference type="ChEBI" id="CHEBI:29105"/>
    </ligand>
</feature>
<feature type="binding site" evidence="1">
    <location>
        <position position="81"/>
    </location>
    <ligand>
        <name>substrate</name>
    </ligand>
</feature>
<feature type="binding site" evidence="1">
    <location>
        <begin position="107"/>
        <end position="116"/>
    </location>
    <ligand>
        <name>substrate</name>
    </ligand>
</feature>
<feature type="binding site" evidence="1">
    <location>
        <begin position="141"/>
        <end position="143"/>
    </location>
    <ligand>
        <name>substrate</name>
    </ligand>
</feature>
<feature type="binding site" evidence="1">
    <location>
        <position position="215"/>
    </location>
    <ligand>
        <name>substrate</name>
    </ligand>
</feature>
<feature type="binding site" evidence="1">
    <location>
        <position position="267"/>
    </location>
    <ligand>
        <name>substrate</name>
    </ligand>
</feature>
<feature type="site" description="Catalytically relevant" evidence="1">
    <location>
        <position position="52"/>
    </location>
</feature>
<feature type="site" description="Catalytically relevant" evidence="1">
    <location>
        <position position="104"/>
    </location>
</feature>
<feature type="site" description="Catalytically relevant" evidence="1">
    <location>
        <position position="145"/>
    </location>
</feature>
<feature type="site" description="Catalytically relevant" evidence="1">
    <location>
        <position position="186"/>
    </location>
</feature>
<protein>
    <recommendedName>
        <fullName>Arabinose 5-phosphate isomerase GutQ</fullName>
        <shortName>API</shortName>
        <shortName>G-API</shortName>
        <ecNumber>5.3.1.13</ecNumber>
    </recommendedName>
    <alternativeName>
        <fullName>Phosphosugar aldol-ketol isomerase</fullName>
    </alternativeName>
</protein>
<accession>Q83MK2</accession>
<accession>Q7UBU1</accession>
<keyword id="KW-0067">ATP-binding</keyword>
<keyword id="KW-0129">CBS domain</keyword>
<keyword id="KW-0413">Isomerase</keyword>
<keyword id="KW-0448">Lipopolysaccharide biosynthesis</keyword>
<keyword id="KW-0479">Metal-binding</keyword>
<keyword id="KW-0547">Nucleotide-binding</keyword>
<keyword id="KW-1185">Reference proteome</keyword>
<keyword id="KW-0677">Repeat</keyword>
<keyword id="KW-0862">Zinc</keyword>